<gene>
    <name type="primary">PETE</name>
</gene>
<comment type="function">
    <text evidence="1">Participates in electron transfer between P700 and the cytochrome b6-f complex in photosystem I.</text>
</comment>
<comment type="cofactor">
    <cofactor evidence="1">
        <name>Cu(2+)</name>
        <dbReference type="ChEBI" id="CHEBI:29036"/>
    </cofactor>
</comment>
<comment type="subcellular location">
    <subcellularLocation>
        <location evidence="2">Plastid</location>
        <location evidence="2">Chloroplast thylakoid membrane</location>
        <topology evidence="1">Peripheral membrane protein</topology>
        <orientation evidence="1">Lumenal side</orientation>
    </subcellularLocation>
    <text>Loosely bound to the inner thylakoid membrane surface in chloroplasts (By similarity).</text>
</comment>
<comment type="similarity">
    <text evidence="3">Belongs to the plastocyanin family.</text>
</comment>
<organism>
    <name type="scientific">Solanum tuberosum</name>
    <name type="common">Potato</name>
    <dbReference type="NCBI Taxonomy" id="4113"/>
    <lineage>
        <taxon>Eukaryota</taxon>
        <taxon>Viridiplantae</taxon>
        <taxon>Streptophyta</taxon>
        <taxon>Embryophyta</taxon>
        <taxon>Tracheophyta</taxon>
        <taxon>Spermatophyta</taxon>
        <taxon>Magnoliopsida</taxon>
        <taxon>eudicotyledons</taxon>
        <taxon>Gunneridae</taxon>
        <taxon>Pentapetalae</taxon>
        <taxon>asterids</taxon>
        <taxon>lamiids</taxon>
        <taxon>Solanales</taxon>
        <taxon>Solanaceae</taxon>
        <taxon>Solanoideae</taxon>
        <taxon>Solaneae</taxon>
        <taxon>Solanum</taxon>
    </lineage>
</organism>
<protein>
    <recommendedName>
        <fullName>Plastocyanin</fullName>
    </recommendedName>
</protein>
<sequence length="99" mass="10330">LDVLLGGDDGSLAFIPGNFSVSAGEKITFKNNAGFPHNVVFDEDEIPAGVDASKISMAEEDLLNAAGETYSVTLSEKGTYTFYCAPHQGAGMVGKVTVN</sequence>
<dbReference type="PIR" id="A00306">
    <property type="entry name" value="CUPO"/>
</dbReference>
<dbReference type="SMR" id="P00296"/>
<dbReference type="FunCoup" id="P00296">
    <property type="interactions" value="1286"/>
</dbReference>
<dbReference type="STRING" id="4113.P00296"/>
<dbReference type="PaxDb" id="4113-PGSC0003DMT400092049"/>
<dbReference type="eggNOG" id="ENOG502RXIY">
    <property type="taxonomic scope" value="Eukaryota"/>
</dbReference>
<dbReference type="InParanoid" id="P00296"/>
<dbReference type="Proteomes" id="UP000011115">
    <property type="component" value="Unassembled WGS sequence"/>
</dbReference>
<dbReference type="GO" id="GO:0009535">
    <property type="term" value="C:chloroplast thylakoid membrane"/>
    <property type="evidence" value="ECO:0007669"/>
    <property type="project" value="UniProtKB-SubCell"/>
</dbReference>
<dbReference type="GO" id="GO:0005507">
    <property type="term" value="F:copper ion binding"/>
    <property type="evidence" value="ECO:0007669"/>
    <property type="project" value="InterPro"/>
</dbReference>
<dbReference type="GO" id="GO:0009055">
    <property type="term" value="F:electron transfer activity"/>
    <property type="evidence" value="ECO:0007669"/>
    <property type="project" value="InterPro"/>
</dbReference>
<dbReference type="CDD" id="cd04219">
    <property type="entry name" value="Plastocyanin"/>
    <property type="match status" value="1"/>
</dbReference>
<dbReference type="Gene3D" id="2.60.40.420">
    <property type="entry name" value="Cupredoxins - blue copper proteins"/>
    <property type="match status" value="1"/>
</dbReference>
<dbReference type="InterPro" id="IPR000923">
    <property type="entry name" value="BlueCu_1"/>
</dbReference>
<dbReference type="InterPro" id="IPR028871">
    <property type="entry name" value="BlueCu_1_BS"/>
</dbReference>
<dbReference type="InterPro" id="IPR001235">
    <property type="entry name" value="Copper_blue_Plastocyanin"/>
</dbReference>
<dbReference type="InterPro" id="IPR008972">
    <property type="entry name" value="Cupredoxin"/>
</dbReference>
<dbReference type="InterPro" id="IPR002387">
    <property type="entry name" value="Plastocyanin"/>
</dbReference>
<dbReference type="NCBIfam" id="TIGR02656">
    <property type="entry name" value="cyanin_plasto"/>
    <property type="match status" value="1"/>
</dbReference>
<dbReference type="PANTHER" id="PTHR34192">
    <property type="entry name" value="PLASTOCYANIN MAJOR ISOFORM, CHLOROPLASTIC-RELATED"/>
    <property type="match status" value="1"/>
</dbReference>
<dbReference type="PANTHER" id="PTHR34192:SF10">
    <property type="entry name" value="PLASTOCYANIN MAJOR ISOFORM, CHLOROPLASTIC-RELATED"/>
    <property type="match status" value="1"/>
</dbReference>
<dbReference type="Pfam" id="PF00127">
    <property type="entry name" value="Copper-bind"/>
    <property type="match status" value="1"/>
</dbReference>
<dbReference type="PRINTS" id="PR00156">
    <property type="entry name" value="COPPERBLUE"/>
</dbReference>
<dbReference type="PRINTS" id="PR00157">
    <property type="entry name" value="PLASTOCYANIN"/>
</dbReference>
<dbReference type="SUPFAM" id="SSF49503">
    <property type="entry name" value="Cupredoxins"/>
    <property type="match status" value="1"/>
</dbReference>
<dbReference type="PROSITE" id="PS00196">
    <property type="entry name" value="COPPER_BLUE"/>
    <property type="match status" value="1"/>
</dbReference>
<reference key="1">
    <citation type="journal article" date="1974" name="Biochem. J.">
        <title>The amino acid sequence of plastocyanin from Solanum tuberosum L. (potato).</title>
        <authorList>
            <person name="Ramshaw J.A.M."/>
            <person name="Scawen M.D."/>
            <person name="Bailey C.J."/>
            <person name="Boulter D."/>
        </authorList>
    </citation>
    <scope>PROTEIN SEQUENCE</scope>
    <scope>SUBCELLULAR LOCATION</scope>
</reference>
<accession>P00296</accession>
<evidence type="ECO:0000250" key="1">
    <source>
        <dbReference type="UniProtKB" id="P18068"/>
    </source>
</evidence>
<evidence type="ECO:0000269" key="2">
    <source>
    </source>
</evidence>
<evidence type="ECO:0000305" key="3"/>
<feature type="chain" id="PRO_0000085575" description="Plastocyanin">
    <location>
        <begin position="1"/>
        <end position="99"/>
    </location>
</feature>
<feature type="domain" description="Plastocyanin-like">
    <location>
        <begin position="1"/>
        <end position="99"/>
    </location>
</feature>
<feature type="binding site" evidence="1">
    <location>
        <position position="37"/>
    </location>
    <ligand>
        <name>Cu cation</name>
        <dbReference type="ChEBI" id="CHEBI:23378"/>
    </ligand>
</feature>
<feature type="binding site" evidence="1">
    <location>
        <position position="84"/>
    </location>
    <ligand>
        <name>Cu cation</name>
        <dbReference type="ChEBI" id="CHEBI:23378"/>
    </ligand>
</feature>
<feature type="binding site" evidence="1">
    <location>
        <position position="87"/>
    </location>
    <ligand>
        <name>Cu cation</name>
        <dbReference type="ChEBI" id="CHEBI:23378"/>
    </ligand>
</feature>
<feature type="binding site" evidence="1">
    <location>
        <position position="92"/>
    </location>
    <ligand>
        <name>Cu cation</name>
        <dbReference type="ChEBI" id="CHEBI:23378"/>
    </ligand>
</feature>
<keyword id="KW-0150">Chloroplast</keyword>
<keyword id="KW-0186">Copper</keyword>
<keyword id="KW-0903">Direct protein sequencing</keyword>
<keyword id="KW-0249">Electron transport</keyword>
<keyword id="KW-0472">Membrane</keyword>
<keyword id="KW-0479">Metal-binding</keyword>
<keyword id="KW-0934">Plastid</keyword>
<keyword id="KW-1185">Reference proteome</keyword>
<keyword id="KW-0793">Thylakoid</keyword>
<keyword id="KW-0813">Transport</keyword>
<proteinExistence type="evidence at protein level"/>
<name>PLAS_SOLTU</name>